<organism>
    <name type="scientific">Chromobacterium violaceum (strain ATCC 12472 / DSM 30191 / JCM 1249 / CCUG 213 / NBRC 12614 / NCIMB 9131 / NCTC 9757 / MK)</name>
    <dbReference type="NCBI Taxonomy" id="243365"/>
    <lineage>
        <taxon>Bacteria</taxon>
        <taxon>Pseudomonadati</taxon>
        <taxon>Pseudomonadota</taxon>
        <taxon>Betaproteobacteria</taxon>
        <taxon>Neisseriales</taxon>
        <taxon>Chromobacteriaceae</taxon>
        <taxon>Chromobacterium</taxon>
    </lineage>
</organism>
<dbReference type="EC" id="7.1.1.-" evidence="1"/>
<dbReference type="EMBL" id="AE016825">
    <property type="protein sequence ID" value="AAQ58618.1"/>
    <property type="molecule type" value="Genomic_DNA"/>
</dbReference>
<dbReference type="RefSeq" id="WP_011134499.1">
    <property type="nucleotide sequence ID" value="NC_005085.1"/>
</dbReference>
<dbReference type="SMR" id="Q7NZH8"/>
<dbReference type="STRING" id="243365.CV_0944"/>
<dbReference type="KEGG" id="cvi:CV_0944"/>
<dbReference type="eggNOG" id="COG0649">
    <property type="taxonomic scope" value="Bacteria"/>
</dbReference>
<dbReference type="HOGENOM" id="CLU_015134_1_1_4"/>
<dbReference type="OrthoDB" id="9801496at2"/>
<dbReference type="Proteomes" id="UP000001424">
    <property type="component" value="Chromosome"/>
</dbReference>
<dbReference type="GO" id="GO:0005886">
    <property type="term" value="C:plasma membrane"/>
    <property type="evidence" value="ECO:0007669"/>
    <property type="project" value="UniProtKB-SubCell"/>
</dbReference>
<dbReference type="GO" id="GO:0051287">
    <property type="term" value="F:NAD binding"/>
    <property type="evidence" value="ECO:0007669"/>
    <property type="project" value="InterPro"/>
</dbReference>
<dbReference type="GO" id="GO:0050136">
    <property type="term" value="F:NADH:ubiquinone reductase (non-electrogenic) activity"/>
    <property type="evidence" value="ECO:0007669"/>
    <property type="project" value="UniProtKB-UniRule"/>
</dbReference>
<dbReference type="GO" id="GO:0048038">
    <property type="term" value="F:quinone binding"/>
    <property type="evidence" value="ECO:0007669"/>
    <property type="project" value="UniProtKB-KW"/>
</dbReference>
<dbReference type="FunFam" id="1.10.645.10:FF:000005">
    <property type="entry name" value="NADH-quinone oxidoreductase subunit D"/>
    <property type="match status" value="1"/>
</dbReference>
<dbReference type="Gene3D" id="1.10.645.10">
    <property type="entry name" value="Cytochrome-c3 Hydrogenase, chain B"/>
    <property type="match status" value="1"/>
</dbReference>
<dbReference type="HAMAP" id="MF_01358">
    <property type="entry name" value="NDH1_NuoD"/>
    <property type="match status" value="1"/>
</dbReference>
<dbReference type="InterPro" id="IPR001135">
    <property type="entry name" value="NADH_Q_OxRdtase_suD"/>
</dbReference>
<dbReference type="InterPro" id="IPR014029">
    <property type="entry name" value="NADH_UbQ_OxRdtase_49kDa_CS"/>
</dbReference>
<dbReference type="InterPro" id="IPR022885">
    <property type="entry name" value="NDH1_su_D/H"/>
</dbReference>
<dbReference type="InterPro" id="IPR029014">
    <property type="entry name" value="NiFe-Hase_large"/>
</dbReference>
<dbReference type="NCBIfam" id="TIGR01962">
    <property type="entry name" value="NuoD"/>
    <property type="match status" value="1"/>
</dbReference>
<dbReference type="NCBIfam" id="NF004739">
    <property type="entry name" value="PRK06075.1"/>
    <property type="match status" value="1"/>
</dbReference>
<dbReference type="PANTHER" id="PTHR11993:SF10">
    <property type="entry name" value="NADH DEHYDROGENASE [UBIQUINONE] IRON-SULFUR PROTEIN 2, MITOCHONDRIAL"/>
    <property type="match status" value="1"/>
</dbReference>
<dbReference type="PANTHER" id="PTHR11993">
    <property type="entry name" value="NADH-UBIQUINONE OXIDOREDUCTASE 49 KDA SUBUNIT"/>
    <property type="match status" value="1"/>
</dbReference>
<dbReference type="Pfam" id="PF00346">
    <property type="entry name" value="Complex1_49kDa"/>
    <property type="match status" value="1"/>
</dbReference>
<dbReference type="SUPFAM" id="SSF56762">
    <property type="entry name" value="HydB/Nqo4-like"/>
    <property type="match status" value="1"/>
</dbReference>
<dbReference type="PROSITE" id="PS00535">
    <property type="entry name" value="COMPLEX1_49K"/>
    <property type="match status" value="1"/>
</dbReference>
<evidence type="ECO:0000255" key="1">
    <source>
        <dbReference type="HAMAP-Rule" id="MF_01358"/>
    </source>
</evidence>
<name>NUOD_CHRVO</name>
<keyword id="KW-0997">Cell inner membrane</keyword>
<keyword id="KW-1003">Cell membrane</keyword>
<keyword id="KW-0472">Membrane</keyword>
<keyword id="KW-0520">NAD</keyword>
<keyword id="KW-0874">Quinone</keyword>
<keyword id="KW-1185">Reference proteome</keyword>
<keyword id="KW-1278">Translocase</keyword>
<keyword id="KW-0813">Transport</keyword>
<keyword id="KW-0830">Ubiquinone</keyword>
<comment type="function">
    <text evidence="1">NDH-1 shuttles electrons from NADH, via FMN and iron-sulfur (Fe-S) centers, to quinones in the respiratory chain. The immediate electron acceptor for the enzyme in this species is believed to be ubiquinone. Couples the redox reaction to proton translocation (for every two electrons transferred, four hydrogen ions are translocated across the cytoplasmic membrane), and thus conserves the redox energy in a proton gradient.</text>
</comment>
<comment type="catalytic activity">
    <reaction evidence="1">
        <text>a quinone + NADH + 5 H(+)(in) = a quinol + NAD(+) + 4 H(+)(out)</text>
        <dbReference type="Rhea" id="RHEA:57888"/>
        <dbReference type="ChEBI" id="CHEBI:15378"/>
        <dbReference type="ChEBI" id="CHEBI:24646"/>
        <dbReference type="ChEBI" id="CHEBI:57540"/>
        <dbReference type="ChEBI" id="CHEBI:57945"/>
        <dbReference type="ChEBI" id="CHEBI:132124"/>
    </reaction>
</comment>
<comment type="subunit">
    <text evidence="1">NDH-1 is composed of 14 different subunits. Subunits NuoB, C, D, E, F, and G constitute the peripheral sector of the complex.</text>
</comment>
<comment type="subcellular location">
    <subcellularLocation>
        <location evidence="1">Cell inner membrane</location>
        <topology evidence="1">Peripheral membrane protein</topology>
        <orientation evidence="1">Cytoplasmic side</orientation>
    </subcellularLocation>
</comment>
<comment type="similarity">
    <text evidence="1">Belongs to the complex I 49 kDa subunit family.</text>
</comment>
<protein>
    <recommendedName>
        <fullName evidence="1">NADH-quinone oxidoreductase subunit D</fullName>
        <ecNumber evidence="1">7.1.1.-</ecNumber>
    </recommendedName>
    <alternativeName>
        <fullName evidence="1">NADH dehydrogenase I subunit D</fullName>
    </alternativeName>
    <alternativeName>
        <fullName evidence="1">NDH-1 subunit D</fullName>
    </alternativeName>
</protein>
<reference key="1">
    <citation type="journal article" date="2003" name="Proc. Natl. Acad. Sci. U.S.A.">
        <title>The complete genome sequence of Chromobacterium violaceum reveals remarkable and exploitable bacterial adaptability.</title>
        <authorList>
            <person name="Vasconcelos A.T.R."/>
            <person name="de Almeida D.F."/>
            <person name="Hungria M."/>
            <person name="Guimaraes C.T."/>
            <person name="Antonio R.V."/>
            <person name="Almeida F.C."/>
            <person name="de Almeida L.G.P."/>
            <person name="de Almeida R."/>
            <person name="Alves-Gomes J.A."/>
            <person name="Andrade E.M."/>
            <person name="Araripe J."/>
            <person name="de Araujo M.F.F."/>
            <person name="Astolfi-Filho S."/>
            <person name="Azevedo V."/>
            <person name="Baptista A.J."/>
            <person name="Bataus L.A.M."/>
            <person name="Batista J.S."/>
            <person name="Belo A."/>
            <person name="van den Berg C."/>
            <person name="Bogo M."/>
            <person name="Bonatto S."/>
            <person name="Bordignon J."/>
            <person name="Brigido M.M."/>
            <person name="Brito C.A."/>
            <person name="Brocchi M."/>
            <person name="Burity H.A."/>
            <person name="Camargo A.A."/>
            <person name="Cardoso D.D.P."/>
            <person name="Carneiro N.P."/>
            <person name="Carraro D.M."/>
            <person name="Carvalho C.M.B."/>
            <person name="Cascardo J.C.M."/>
            <person name="Cavada B.S."/>
            <person name="Chueire L.M.O."/>
            <person name="Creczynski-Pasa T.B."/>
            <person name="Cunha-Junior N.C."/>
            <person name="Fagundes N."/>
            <person name="Falcao C.L."/>
            <person name="Fantinatti F."/>
            <person name="Farias I.P."/>
            <person name="Felipe M.S.S."/>
            <person name="Ferrari L.P."/>
            <person name="Ferro J.A."/>
            <person name="Ferro M.I.T."/>
            <person name="Franco G.R."/>
            <person name="Freitas N.S.A."/>
            <person name="Furlan L.R."/>
            <person name="Gazzinelli R.T."/>
            <person name="Gomes E.A."/>
            <person name="Goncalves P.R."/>
            <person name="Grangeiro T.B."/>
            <person name="Grattapaglia D."/>
            <person name="Grisard E.C."/>
            <person name="Hanna E.S."/>
            <person name="Jardim S.N."/>
            <person name="Laurino J."/>
            <person name="Leoi L.C.T."/>
            <person name="Lima L.F.A."/>
            <person name="Loureiro M.F."/>
            <person name="Lyra M.C.C.P."/>
            <person name="Madeira H.M.F."/>
            <person name="Manfio G.P."/>
            <person name="Maranhao A.Q."/>
            <person name="Martins W.S."/>
            <person name="di Mauro S.M.Z."/>
            <person name="de Medeiros S.R.B."/>
            <person name="Meissner R.V."/>
            <person name="Moreira M.A.M."/>
            <person name="Nascimento F.F."/>
            <person name="Nicolas M.F."/>
            <person name="Oliveira J.G."/>
            <person name="Oliveira S.C."/>
            <person name="Paixao R.F.C."/>
            <person name="Parente J.A."/>
            <person name="Pedrosa F.O."/>
            <person name="Pena S.D.J."/>
            <person name="Pereira J.O."/>
            <person name="Pereira M."/>
            <person name="Pinto L.S.R.C."/>
            <person name="Pinto L.S."/>
            <person name="Porto J.I.R."/>
            <person name="Potrich D.P."/>
            <person name="Ramalho-Neto C.E."/>
            <person name="Reis A.M.M."/>
            <person name="Rigo L.U."/>
            <person name="Rondinelli E."/>
            <person name="Santos E.B.P."/>
            <person name="Santos F.R."/>
            <person name="Schneider M.P.C."/>
            <person name="Seuanez H.N."/>
            <person name="Silva A.M.R."/>
            <person name="da Silva A.L.C."/>
            <person name="Silva D.W."/>
            <person name="Silva R."/>
            <person name="Simoes I.C."/>
            <person name="Simon D."/>
            <person name="Soares C.M.A."/>
            <person name="Soares R.B.A."/>
            <person name="Souza E.M."/>
            <person name="Souza K.R.L."/>
            <person name="Souza R.C."/>
            <person name="Steffens M.B.R."/>
            <person name="Steindel M."/>
            <person name="Teixeira S.R."/>
            <person name="Urmenyi T."/>
            <person name="Vettore A."/>
            <person name="Wassem R."/>
            <person name="Zaha A."/>
            <person name="Simpson A.J.G."/>
        </authorList>
    </citation>
    <scope>NUCLEOTIDE SEQUENCE [LARGE SCALE GENOMIC DNA]</scope>
    <source>
        <strain>ATCC 12472 / DSM 30191 / JCM 1249 / CCUG 213 / NBRC 12614 / NCIMB 9131 / NCTC 9757 / MK</strain>
    </source>
</reference>
<proteinExistence type="inferred from homology"/>
<feature type="chain" id="PRO_0000357801" description="NADH-quinone oxidoreductase subunit D">
    <location>
        <begin position="1"/>
        <end position="417"/>
    </location>
</feature>
<accession>Q7NZH8</accession>
<sequence>MAEIRNYTLNFGPQHPAAHGVLRLVLELDGEVVQRADPHIGLLHRGTEKLAESKTFIQSLPYMDRLDYVSMMCNEHAYCLAIEKMMGIEVPERAQYIRVMFAEITRILNHLLWIGAHALDIGAMTMFLYAFREREDLMDCYEAVSGARMHAAYFRPGGVYRDLPDSMPQYTVSKIKNAKELARLNEGRKGSMLDFIEDFTKRFPTYVDEYETLLTDNRIWKQRTVGIGVVTPERALNLGMTGPMLRGSGIAWDLRKTQPYDVYDKMDFDVPVGVGGDCYDRYLVRVEEMRQSNRIIQQCVAWLRANPGPVITDNHKVAPPSREGMKSNMEDLIHHFKLFTEGMHVPEGEAYAAVEHPKGEFGIYLVSDGANKPYRLKIRAPGYAHLAALDEMATGHMIADVVAIIGTQDIVFGEIDR</sequence>
<gene>
    <name evidence="1" type="primary">nuoD</name>
    <name type="ordered locus">CV_0944</name>
</gene>